<organism>
    <name type="scientific">Oryza sativa subsp. indica</name>
    <name type="common">Rice</name>
    <dbReference type="NCBI Taxonomy" id="39946"/>
    <lineage>
        <taxon>Eukaryota</taxon>
        <taxon>Viridiplantae</taxon>
        <taxon>Streptophyta</taxon>
        <taxon>Embryophyta</taxon>
        <taxon>Tracheophyta</taxon>
        <taxon>Spermatophyta</taxon>
        <taxon>Magnoliopsida</taxon>
        <taxon>Liliopsida</taxon>
        <taxon>Poales</taxon>
        <taxon>Poaceae</taxon>
        <taxon>BOP clade</taxon>
        <taxon>Oryzoideae</taxon>
        <taxon>Oryzeae</taxon>
        <taxon>Oryzinae</taxon>
        <taxon>Oryza</taxon>
        <taxon>Oryza sativa</taxon>
    </lineage>
</organism>
<feature type="chain" id="PRO_0000288511" description="Potassium/proton antiporter CemA">
    <location>
        <begin position="1"/>
        <end position="230"/>
    </location>
</feature>
<feature type="transmembrane region" description="Helical" evidence="1">
    <location>
        <begin position="7"/>
        <end position="27"/>
    </location>
</feature>
<feature type="transmembrane region" description="Helical" evidence="1">
    <location>
        <begin position="106"/>
        <end position="126"/>
    </location>
</feature>
<feature type="transmembrane region" description="Helical" evidence="1">
    <location>
        <begin position="145"/>
        <end position="165"/>
    </location>
</feature>
<feature type="transmembrane region" description="Helical" evidence="1">
    <location>
        <begin position="181"/>
        <end position="201"/>
    </location>
</feature>
<name>CEMA_ORYSI</name>
<accession>P0C303</accession>
<gene>
    <name evidence="1" type="primary">cemA</name>
    <name type="synonym">ycf10</name>
</gene>
<keyword id="KW-0050">Antiport</keyword>
<keyword id="KW-0150">Chloroplast</keyword>
<keyword id="KW-0375">Hydrogen ion transport</keyword>
<keyword id="KW-0406">Ion transport</keyword>
<keyword id="KW-0472">Membrane</keyword>
<keyword id="KW-0934">Plastid</keyword>
<keyword id="KW-1001">Plastid inner membrane</keyword>
<keyword id="KW-0630">Potassium</keyword>
<keyword id="KW-0633">Potassium transport</keyword>
<keyword id="KW-1185">Reference proteome</keyword>
<keyword id="KW-0812">Transmembrane</keyword>
<keyword id="KW-1133">Transmembrane helix</keyword>
<keyword id="KW-0813">Transport</keyword>
<sequence>MKKKKALPSFLYLVFIVLLPWGVSFSFNKCLELWIKNWWNTRQSQTLLTAIQEKRVLERFMELEDLFILDEMIKEKPNTHVQNPPIGIRKEIIQLAKIDNEGHLHIILHFSTNIICLAILSGSFFLGKEELVILNSWVQEFFYNLNDSVKAFFILLVTDFFVGFHSTRGWELLIRWVYNDLGWVPNELIFTIFVCSFPVILDTCLKFWVFFCLNRLSPSLVVIYHSISEA</sequence>
<geneLocation type="chloroplast"/>
<dbReference type="EMBL" id="AY522329">
    <property type="status" value="NOT_ANNOTATED_CDS"/>
    <property type="molecule type" value="Genomic_DNA"/>
</dbReference>
<dbReference type="RefSeq" id="YP_009161376.1">
    <property type="nucleotide sequence ID" value="NC_027678.1"/>
</dbReference>
<dbReference type="STRING" id="39946.P0C303"/>
<dbReference type="Proteomes" id="UP000007015">
    <property type="component" value="Chloroplast"/>
</dbReference>
<dbReference type="GO" id="GO:0009706">
    <property type="term" value="C:chloroplast inner membrane"/>
    <property type="evidence" value="ECO:0007669"/>
    <property type="project" value="UniProtKB-SubCell"/>
</dbReference>
<dbReference type="GO" id="GO:0009536">
    <property type="term" value="C:plastid"/>
    <property type="evidence" value="ECO:0000305"/>
    <property type="project" value="Gramene"/>
</dbReference>
<dbReference type="GO" id="GO:0015297">
    <property type="term" value="F:antiporter activity"/>
    <property type="evidence" value="ECO:0007669"/>
    <property type="project" value="UniProtKB-KW"/>
</dbReference>
<dbReference type="GO" id="GO:0015078">
    <property type="term" value="F:proton transmembrane transporter activity"/>
    <property type="evidence" value="ECO:0007669"/>
    <property type="project" value="UniProtKB-UniRule"/>
</dbReference>
<dbReference type="GO" id="GO:0006813">
    <property type="term" value="P:potassium ion transport"/>
    <property type="evidence" value="ECO:0007669"/>
    <property type="project" value="UniProtKB-UniRule"/>
</dbReference>
<dbReference type="HAMAP" id="MF_01308">
    <property type="entry name" value="CemA_PxcA"/>
    <property type="match status" value="1"/>
</dbReference>
<dbReference type="InterPro" id="IPR004282">
    <property type="entry name" value="CemA"/>
</dbReference>
<dbReference type="PANTHER" id="PTHR33650:SF2">
    <property type="entry name" value="CHLOROPLAST ENVELOPE MEMBRANE PROTEIN"/>
    <property type="match status" value="1"/>
</dbReference>
<dbReference type="PANTHER" id="PTHR33650">
    <property type="entry name" value="CHLOROPLAST ENVELOPE MEMBRANE PROTEIN-RELATED"/>
    <property type="match status" value="1"/>
</dbReference>
<dbReference type="Pfam" id="PF03040">
    <property type="entry name" value="CemA"/>
    <property type="match status" value="1"/>
</dbReference>
<reference key="1">
    <citation type="journal article" date="2004" name="Plant Physiol.">
        <title>A comparison of rice chloroplast genomes.</title>
        <authorList>
            <person name="Tang J."/>
            <person name="Xia H."/>
            <person name="Cao M."/>
            <person name="Zhang X."/>
            <person name="Zeng W."/>
            <person name="Hu S."/>
            <person name="Tong W."/>
            <person name="Wang J."/>
            <person name="Wang J."/>
            <person name="Yu J."/>
            <person name="Yang H."/>
            <person name="Zhu L."/>
        </authorList>
    </citation>
    <scope>NUCLEOTIDE SEQUENCE [LARGE SCALE GENOMIC DNA]</scope>
    <source>
        <strain>cv. 93-11</strain>
    </source>
</reference>
<evidence type="ECO:0000255" key="1">
    <source>
        <dbReference type="HAMAP-Rule" id="MF_01308"/>
    </source>
</evidence>
<evidence type="ECO:0000305" key="2"/>
<protein>
    <recommendedName>
        <fullName evidence="1">Potassium/proton antiporter CemA</fullName>
    </recommendedName>
    <alternativeName>
        <fullName evidence="1">Chloroplast envelope membrane protein A</fullName>
        <shortName evidence="1">CemA</shortName>
    </alternativeName>
</protein>
<proteinExistence type="inferred from homology"/>
<comment type="function">
    <text evidence="1">Contributes to K(+)/H(+) antiport activity by supporting proton efflux to control proton extrusion and homeostasis in chloroplasts in a light-dependent manner to modulate photosynthesis. Prevents excessive induction of non-photochemical quenching (NPQ) under continuous-light conditions. Indirectly promotes efficient inorganic carbon uptake into chloroplasts.</text>
</comment>
<comment type="catalytic activity">
    <reaction evidence="1">
        <text>K(+)(in) + H(+)(out) = K(+)(out) + H(+)(in)</text>
        <dbReference type="Rhea" id="RHEA:29467"/>
        <dbReference type="ChEBI" id="CHEBI:15378"/>
        <dbReference type="ChEBI" id="CHEBI:29103"/>
    </reaction>
</comment>
<comment type="subcellular location">
    <subcellularLocation>
        <location evidence="1">Plastid</location>
        <location evidence="1">Chloroplast inner membrane</location>
        <topology evidence="1">Multi-pass membrane protein</topology>
    </subcellularLocation>
</comment>
<comment type="similarity">
    <text evidence="1 2">Belongs to the CemA family.</text>
</comment>